<organism>
    <name type="scientific">Enterobacter sp. (strain 638)</name>
    <dbReference type="NCBI Taxonomy" id="399742"/>
    <lineage>
        <taxon>Bacteria</taxon>
        <taxon>Pseudomonadati</taxon>
        <taxon>Pseudomonadota</taxon>
        <taxon>Gammaproteobacteria</taxon>
        <taxon>Enterobacterales</taxon>
        <taxon>Enterobacteriaceae</taxon>
        <taxon>Enterobacter</taxon>
    </lineage>
</organism>
<proteinExistence type="inferred from homology"/>
<protein>
    <recommendedName>
        <fullName evidence="1">L-rhamnose mutarotase</fullName>
        <ecNumber evidence="1">5.1.3.32</ecNumber>
    </recommendedName>
    <alternativeName>
        <fullName evidence="1">Rhamnose 1-epimerase</fullName>
    </alternativeName>
    <alternativeName>
        <fullName evidence="1">Type-3 mutarotase</fullName>
    </alternativeName>
</protein>
<evidence type="ECO:0000255" key="1">
    <source>
        <dbReference type="HAMAP-Rule" id="MF_01663"/>
    </source>
</evidence>
<comment type="function">
    <text evidence="1">Involved in the anomeric conversion of L-rhamnose.</text>
</comment>
<comment type="catalytic activity">
    <reaction evidence="1">
        <text>alpha-L-rhamnose = beta-L-rhamnose</text>
        <dbReference type="Rhea" id="RHEA:25584"/>
        <dbReference type="ChEBI" id="CHEBI:27586"/>
        <dbReference type="ChEBI" id="CHEBI:27907"/>
        <dbReference type="EC" id="5.1.3.32"/>
    </reaction>
</comment>
<comment type="pathway">
    <text evidence="1">Carbohydrate metabolism; L-rhamnose metabolism.</text>
</comment>
<comment type="subunit">
    <text evidence="1">Homodimer.</text>
</comment>
<comment type="subcellular location">
    <subcellularLocation>
        <location evidence="1">Cytoplasm</location>
    </subcellularLocation>
</comment>
<comment type="similarity">
    <text evidence="1">Belongs to the rhamnose mutarotase family.</text>
</comment>
<gene>
    <name evidence="1" type="primary">rhaM</name>
    <name type="ordered locus">Ent638_4075</name>
</gene>
<dbReference type="EC" id="5.1.3.32" evidence="1"/>
<dbReference type="EMBL" id="CP000653">
    <property type="protein sequence ID" value="ABP62730.1"/>
    <property type="molecule type" value="Genomic_DNA"/>
</dbReference>
<dbReference type="RefSeq" id="WP_015961034.1">
    <property type="nucleotide sequence ID" value="NC_009436.1"/>
</dbReference>
<dbReference type="SMR" id="A4WGA0"/>
<dbReference type="STRING" id="399742.Ent638_4075"/>
<dbReference type="KEGG" id="ent:Ent638_4075"/>
<dbReference type="eggNOG" id="COG3254">
    <property type="taxonomic scope" value="Bacteria"/>
</dbReference>
<dbReference type="HOGENOM" id="CLU_100689_2_0_6"/>
<dbReference type="OrthoDB" id="9799608at2"/>
<dbReference type="UniPathway" id="UPA00125"/>
<dbReference type="Proteomes" id="UP000000230">
    <property type="component" value="Chromosome"/>
</dbReference>
<dbReference type="GO" id="GO:0005737">
    <property type="term" value="C:cytoplasm"/>
    <property type="evidence" value="ECO:0007669"/>
    <property type="project" value="UniProtKB-SubCell"/>
</dbReference>
<dbReference type="GO" id="GO:0062192">
    <property type="term" value="F:L-rhamnose mutarotase activity"/>
    <property type="evidence" value="ECO:0007669"/>
    <property type="project" value="UniProtKB-EC"/>
</dbReference>
<dbReference type="GO" id="GO:0019301">
    <property type="term" value="P:rhamnose catabolic process"/>
    <property type="evidence" value="ECO:0007669"/>
    <property type="project" value="TreeGrafter"/>
</dbReference>
<dbReference type="Gene3D" id="3.30.70.100">
    <property type="match status" value="1"/>
</dbReference>
<dbReference type="HAMAP" id="MF_01663">
    <property type="entry name" value="L_rham_rotase"/>
    <property type="match status" value="1"/>
</dbReference>
<dbReference type="InterPro" id="IPR011008">
    <property type="entry name" value="Dimeric_a/b-barrel"/>
</dbReference>
<dbReference type="InterPro" id="IPR013448">
    <property type="entry name" value="L-rhamnose_mutarotase"/>
</dbReference>
<dbReference type="InterPro" id="IPR008000">
    <property type="entry name" value="Rham/fucose_mutarotase"/>
</dbReference>
<dbReference type="NCBIfam" id="TIGR02625">
    <property type="entry name" value="YiiL_rotase"/>
    <property type="match status" value="1"/>
</dbReference>
<dbReference type="PANTHER" id="PTHR34389">
    <property type="entry name" value="L-RHAMNOSE MUTAROTASE"/>
    <property type="match status" value="1"/>
</dbReference>
<dbReference type="PANTHER" id="PTHR34389:SF2">
    <property type="entry name" value="L-RHAMNOSE MUTAROTASE"/>
    <property type="match status" value="1"/>
</dbReference>
<dbReference type="Pfam" id="PF05336">
    <property type="entry name" value="rhaM"/>
    <property type="match status" value="1"/>
</dbReference>
<dbReference type="SUPFAM" id="SSF54909">
    <property type="entry name" value="Dimeric alpha+beta barrel"/>
    <property type="match status" value="1"/>
</dbReference>
<feature type="chain" id="PRO_0000344566" description="L-rhamnose mutarotase">
    <location>
        <begin position="1"/>
        <end position="104"/>
    </location>
</feature>
<feature type="active site" description="Proton donor" evidence="1">
    <location>
        <position position="22"/>
    </location>
</feature>
<feature type="binding site" evidence="1">
    <location>
        <position position="18"/>
    </location>
    <ligand>
        <name>substrate</name>
    </ligand>
</feature>
<feature type="binding site" evidence="1">
    <location>
        <position position="41"/>
    </location>
    <ligand>
        <name>substrate</name>
    </ligand>
</feature>
<feature type="binding site" evidence="1">
    <location>
        <begin position="76"/>
        <end position="77"/>
    </location>
    <ligand>
        <name>substrate</name>
    </ligand>
</feature>
<name>RHAM_ENT38</name>
<accession>A4WGA0</accession>
<reference key="1">
    <citation type="journal article" date="2010" name="PLoS Genet.">
        <title>Genome sequence of the plant growth promoting endophytic bacterium Enterobacter sp. 638.</title>
        <authorList>
            <person name="Taghavi S."/>
            <person name="van der Lelie D."/>
            <person name="Hoffman A."/>
            <person name="Zhang Y.B."/>
            <person name="Walla M.D."/>
            <person name="Vangronsveld J."/>
            <person name="Newman L."/>
            <person name="Monchy S."/>
        </authorList>
    </citation>
    <scope>NUCLEOTIDE SEQUENCE [LARGE SCALE GENOMIC DNA]</scope>
    <source>
        <strain>638</strain>
    </source>
</reference>
<sequence>MIRKAFVMQVNPDSHDEYERRHTPIWPELESVLKDHGAHHYAIYLDKARNLLFATVEIESEERWNAVAHTDVCQRWWKHMRDVMPSNPDNSPVSAELKEVFYLD</sequence>
<keyword id="KW-0119">Carbohydrate metabolism</keyword>
<keyword id="KW-0963">Cytoplasm</keyword>
<keyword id="KW-0413">Isomerase</keyword>
<keyword id="KW-0684">Rhamnose metabolism</keyword>